<dbReference type="EC" id="1.-.-.-" evidence="7"/>
<dbReference type="EMBL" id="AZHC01000030">
    <property type="protein sequence ID" value="OAA37393.1"/>
    <property type="molecule type" value="Genomic_DNA"/>
</dbReference>
<dbReference type="SMR" id="A0A166YZR3"/>
<dbReference type="STRING" id="1081105.A0A166YZR3"/>
<dbReference type="OrthoDB" id="3945418at2759"/>
<dbReference type="Proteomes" id="UP000243498">
    <property type="component" value="Unassembled WGS sequence"/>
</dbReference>
<dbReference type="GO" id="GO:0020037">
    <property type="term" value="F:heme binding"/>
    <property type="evidence" value="ECO:0007669"/>
    <property type="project" value="InterPro"/>
</dbReference>
<dbReference type="GO" id="GO:0005506">
    <property type="term" value="F:iron ion binding"/>
    <property type="evidence" value="ECO:0007669"/>
    <property type="project" value="InterPro"/>
</dbReference>
<dbReference type="GO" id="GO:0004497">
    <property type="term" value="F:monooxygenase activity"/>
    <property type="evidence" value="ECO:0007669"/>
    <property type="project" value="UniProtKB-KW"/>
</dbReference>
<dbReference type="GO" id="GO:0016705">
    <property type="term" value="F:oxidoreductase activity, acting on paired donors, with incorporation or reduction of molecular oxygen"/>
    <property type="evidence" value="ECO:0007669"/>
    <property type="project" value="InterPro"/>
</dbReference>
<dbReference type="Gene3D" id="1.10.630.10">
    <property type="entry name" value="Cytochrome P450"/>
    <property type="match status" value="1"/>
</dbReference>
<dbReference type="InterPro" id="IPR001128">
    <property type="entry name" value="Cyt_P450"/>
</dbReference>
<dbReference type="InterPro" id="IPR036396">
    <property type="entry name" value="Cyt_P450_sf"/>
</dbReference>
<dbReference type="Pfam" id="PF00067">
    <property type="entry name" value="p450"/>
    <property type="match status" value="1"/>
</dbReference>
<dbReference type="SUPFAM" id="SSF48264">
    <property type="entry name" value="Cytochrome P450"/>
    <property type="match status" value="1"/>
</dbReference>
<comment type="function">
    <text evidence="1 3 4">Cytochrome P450 monooxygenase; part of the gene cluster that mediates the biosynthesis of pyrrolopyrazines, secondary metabolites showing insecticidal activity (PubMed:30452111). The role of ppzG within the pathway has still to be determined (By similarity). The single multifunctional NRPS ppzA is sufficient to produce peramine via condensation of 1-pyrroline-5-carboxylate and arginine, N-methylation of the alpha-amino group of arginine and reduction of the thioester and the cyclization to form an iminium ion resulting in release from the peptide synthetase. Deprotonation of this intermediate and oxidation of the pyrroline ring would give rise to peramine (By similarity). In Epichloe species that produce only peramine, the peramine synthetase gene is not localized in a gene cluster, in contrast to Metarhizium species that contain additional pyrrolopyrazine biosynthesis genes. The 2-oxoglutarate-Fe(II) type oxidoreductase ppzC hydroxylates peramine to yield the newly identified compound 8-hydroxyperamine whereas ppzD converts L-proline into trans-4-hydroxy-L-proline, a precursor of peramine biosynthesis (By similarity).</text>
</comment>
<comment type="cofactor">
    <cofactor evidence="2">
        <name>heme</name>
        <dbReference type="ChEBI" id="CHEBI:30413"/>
    </cofactor>
</comment>
<comment type="pathway">
    <text evidence="7">Secondary metabolite biosynthesis.</text>
</comment>
<comment type="similarity">
    <text evidence="6">Belongs to the cytochrome P450 family.</text>
</comment>
<evidence type="ECO:0000250" key="1">
    <source>
        <dbReference type="UniProtKB" id="A0A455ZM03"/>
    </source>
</evidence>
<evidence type="ECO:0000250" key="2">
    <source>
        <dbReference type="UniProtKB" id="P04798"/>
    </source>
</evidence>
<evidence type="ECO:0000250" key="3">
    <source>
        <dbReference type="UniProtKB" id="Q4H424"/>
    </source>
</evidence>
<evidence type="ECO:0000269" key="4">
    <source>
    </source>
</evidence>
<evidence type="ECO:0000303" key="5">
    <source>
    </source>
</evidence>
<evidence type="ECO:0000305" key="6"/>
<evidence type="ECO:0000305" key="7">
    <source>
    </source>
</evidence>
<evidence type="ECO:0000312" key="8">
    <source>
        <dbReference type="EMBL" id="OAA37393.1"/>
    </source>
</evidence>
<reference key="1">
    <citation type="journal article" date="2016" name="Genome Biol. Evol.">
        <title>Divergent and convergent evolution of fungal pathogenicity.</title>
        <authorList>
            <person name="Shang Y."/>
            <person name="Xiao G."/>
            <person name="Zheng P."/>
            <person name="Cen K."/>
            <person name="Zhan S."/>
            <person name="Wang C."/>
        </authorList>
    </citation>
    <scope>NUCLEOTIDE SEQUENCE [LARGE SCALE GENOMIC DNA]</scope>
    <source>
        <strain>RCEF 4871</strain>
    </source>
</reference>
<reference key="2">
    <citation type="journal article" date="2019" name="Environ. Microbiol.">
        <title>Orthologous peramine and pyrrolopyrazine-producing biosynthetic gene clusters in Metarhizium rileyi, Metarhizium majus and Cladonia grayi.</title>
        <authorList>
            <person name="Berry D."/>
            <person name="Mace W."/>
            <person name="Rehner S.A."/>
            <person name="Grage K."/>
            <person name="Dijkwel P.P."/>
            <person name="Young C.A."/>
            <person name="Scott B."/>
        </authorList>
    </citation>
    <scope>FUNCTION</scope>
    <scope>PATHWAY</scope>
</reference>
<gene>
    <name evidence="5" type="primary">ppzG</name>
    <name evidence="8" type="ORF">NOR_07092</name>
</gene>
<protein>
    <recommendedName>
        <fullName evidence="5">Cytochrome P450 monooxygenase ppzG</fullName>
        <ecNumber evidence="7">1.-.-.-</ecNumber>
    </recommendedName>
    <alternativeName>
        <fullName evidence="5">Pyrrolopyrazine biosynthesis cluster protein G</fullName>
    </alternativeName>
</protein>
<organism>
    <name type="scientific">Metarhizium rileyi (strain RCEF 4871)</name>
    <name type="common">Nomuraea rileyi</name>
    <dbReference type="NCBI Taxonomy" id="1649241"/>
    <lineage>
        <taxon>Eukaryota</taxon>
        <taxon>Fungi</taxon>
        <taxon>Dikarya</taxon>
        <taxon>Ascomycota</taxon>
        <taxon>Pezizomycotina</taxon>
        <taxon>Sordariomycetes</taxon>
        <taxon>Hypocreomycetidae</taxon>
        <taxon>Hypocreales</taxon>
        <taxon>Clavicipitaceae</taxon>
        <taxon>Metarhizium</taxon>
    </lineage>
</organism>
<accession>A0A166YZR3</accession>
<name>PPZG_METRR</name>
<proteinExistence type="inferred from homology"/>
<feature type="chain" id="PRO_0000450264" description="Cytochrome P450 monooxygenase ppzG">
    <location>
        <begin position="1"/>
        <end position="251"/>
    </location>
</feature>
<feature type="binding site" description="axial binding residue" evidence="2">
    <location>
        <position position="250"/>
    </location>
    <ligand>
        <name>heme</name>
        <dbReference type="ChEBI" id="CHEBI:30413"/>
    </ligand>
    <ligandPart>
        <name>Fe</name>
        <dbReference type="ChEBI" id="CHEBI:18248"/>
    </ligandPart>
</feature>
<sequence length="251" mass="27201">MNDFVFSDIPDNVKPMASVEFDDPLTIATGDVLNWTLWLTRNFPALSSIIMRLPSSLVSMVTSSFEGANQMVQVKTSTHNLYSLSLPTHARKQIISQLVEHEKNHIGPKSKDCVMQRLLNAHRDSESKISIPTPDATLRSEAVGFTLAGTADPPNILALGTFMAARDSEMQKGLYKELKAIWPDLRSPAPSYNLLHQLPLLRGIIKESIRFTHGVATGPARLVGAGGARIGGYNVPAKASSFSAAATSDCS</sequence>
<keyword id="KW-0349">Heme</keyword>
<keyword id="KW-0408">Iron</keyword>
<keyword id="KW-0479">Metal-binding</keyword>
<keyword id="KW-0503">Monooxygenase</keyword>
<keyword id="KW-0560">Oxidoreductase</keyword>
<keyword id="KW-1185">Reference proteome</keyword>